<feature type="chain" id="PRO_1000120325" description="GMP synthase [glutamine-hydrolyzing]">
    <location>
        <begin position="1"/>
        <end position="517"/>
    </location>
</feature>
<feature type="domain" description="Glutamine amidotransferase type-1" evidence="1">
    <location>
        <begin position="11"/>
        <end position="202"/>
    </location>
</feature>
<feature type="domain" description="GMPS ATP-PPase" evidence="1">
    <location>
        <begin position="203"/>
        <end position="392"/>
    </location>
</feature>
<feature type="active site" description="Nucleophile" evidence="1">
    <location>
        <position position="88"/>
    </location>
</feature>
<feature type="active site" evidence="1">
    <location>
        <position position="176"/>
    </location>
</feature>
<feature type="active site" evidence="1">
    <location>
        <position position="178"/>
    </location>
</feature>
<feature type="binding site" evidence="1">
    <location>
        <begin position="230"/>
        <end position="236"/>
    </location>
    <ligand>
        <name>ATP</name>
        <dbReference type="ChEBI" id="CHEBI:30616"/>
    </ligand>
</feature>
<sequence length="517" mass="57882">MANDQNKDYDKIIVLDYGSQYNQLITRRIREFGIYSELKPHTITAAEVKKIAPKGIIFSGGPNSVYDEGALGVDEDLFKLGIPILGVCYGMQLMAQRLGGDVEPADNREYGKADIEVTDDSAKLFRDLPKDQTVWMSHGDLVTRVPEGFRRTATSINCPISAMDDDDRKFYGIQFHAEVQNTQYGHEILHHFAFDICKAEANWSMDDFITKQIDKIRAEVGDKRVLLGLSGGVDSSVVGVLLHKAIGTQLTSIFVDHGLLRKGEADQVMESLKGKFGLNIIKVNAKDRFLGDLKGVTDPEKKRKIIGRDFIEVFNEEAAKLNGIDFLAQGTLYTDVVESGTDTAQTIKSHHNVGGLPEDLKFKLIEPLNKLFKDEVRELGEKLGMPHALVWRQPFPGPGLGIRVIGEVTEDKLEIVRDSDYILREEIAKHGLDKDIWQYFTVLPGFRSVGVMGDGRTYDYTIGIRAITSIDGMTADFARINWDVLQEISSRIVNEVKNVNRVVYDITSKPPATIEWE</sequence>
<keyword id="KW-0067">ATP-binding</keyword>
<keyword id="KW-0315">Glutamine amidotransferase</keyword>
<keyword id="KW-0332">GMP biosynthesis</keyword>
<keyword id="KW-0436">Ligase</keyword>
<keyword id="KW-0547">Nucleotide-binding</keyword>
<keyword id="KW-0658">Purine biosynthesis</keyword>
<organism>
    <name type="scientific">Lacticaseibacillus casei (strain BL23)</name>
    <name type="common">Lactobacillus casei</name>
    <dbReference type="NCBI Taxonomy" id="543734"/>
    <lineage>
        <taxon>Bacteria</taxon>
        <taxon>Bacillati</taxon>
        <taxon>Bacillota</taxon>
        <taxon>Bacilli</taxon>
        <taxon>Lactobacillales</taxon>
        <taxon>Lactobacillaceae</taxon>
        <taxon>Lacticaseibacillus</taxon>
    </lineage>
</organism>
<dbReference type="EC" id="6.3.5.2" evidence="1"/>
<dbReference type="EMBL" id="FM177140">
    <property type="protein sequence ID" value="CAQ67221.1"/>
    <property type="molecule type" value="Genomic_DNA"/>
</dbReference>
<dbReference type="SMR" id="B3W952"/>
<dbReference type="MEROPS" id="C26.957"/>
<dbReference type="KEGG" id="lcb:LCABL_21540"/>
<dbReference type="HOGENOM" id="CLU_014340_0_5_9"/>
<dbReference type="UniPathway" id="UPA00189">
    <property type="reaction ID" value="UER00296"/>
</dbReference>
<dbReference type="GO" id="GO:0005829">
    <property type="term" value="C:cytosol"/>
    <property type="evidence" value="ECO:0007669"/>
    <property type="project" value="TreeGrafter"/>
</dbReference>
<dbReference type="GO" id="GO:0005524">
    <property type="term" value="F:ATP binding"/>
    <property type="evidence" value="ECO:0007669"/>
    <property type="project" value="UniProtKB-UniRule"/>
</dbReference>
<dbReference type="GO" id="GO:0003921">
    <property type="term" value="F:GMP synthase activity"/>
    <property type="evidence" value="ECO:0007669"/>
    <property type="project" value="InterPro"/>
</dbReference>
<dbReference type="CDD" id="cd01742">
    <property type="entry name" value="GATase1_GMP_Synthase"/>
    <property type="match status" value="1"/>
</dbReference>
<dbReference type="CDD" id="cd01997">
    <property type="entry name" value="GMP_synthase_C"/>
    <property type="match status" value="1"/>
</dbReference>
<dbReference type="FunFam" id="3.30.300.10:FF:000002">
    <property type="entry name" value="GMP synthase [glutamine-hydrolyzing]"/>
    <property type="match status" value="1"/>
</dbReference>
<dbReference type="FunFam" id="3.40.50.620:FF:000001">
    <property type="entry name" value="GMP synthase [glutamine-hydrolyzing]"/>
    <property type="match status" value="1"/>
</dbReference>
<dbReference type="FunFam" id="3.40.50.880:FF:000001">
    <property type="entry name" value="GMP synthase [glutamine-hydrolyzing]"/>
    <property type="match status" value="1"/>
</dbReference>
<dbReference type="Gene3D" id="3.30.300.10">
    <property type="match status" value="1"/>
</dbReference>
<dbReference type="Gene3D" id="3.40.50.880">
    <property type="match status" value="1"/>
</dbReference>
<dbReference type="Gene3D" id="3.40.50.620">
    <property type="entry name" value="HUPs"/>
    <property type="match status" value="1"/>
</dbReference>
<dbReference type="HAMAP" id="MF_00344">
    <property type="entry name" value="GMP_synthase"/>
    <property type="match status" value="1"/>
</dbReference>
<dbReference type="InterPro" id="IPR029062">
    <property type="entry name" value="Class_I_gatase-like"/>
</dbReference>
<dbReference type="InterPro" id="IPR017926">
    <property type="entry name" value="GATASE"/>
</dbReference>
<dbReference type="InterPro" id="IPR001674">
    <property type="entry name" value="GMP_synth_C"/>
</dbReference>
<dbReference type="InterPro" id="IPR004739">
    <property type="entry name" value="GMP_synth_GATase"/>
</dbReference>
<dbReference type="InterPro" id="IPR022955">
    <property type="entry name" value="GMP_synthase"/>
</dbReference>
<dbReference type="InterPro" id="IPR025777">
    <property type="entry name" value="GMPS_ATP_PPase_dom"/>
</dbReference>
<dbReference type="InterPro" id="IPR022310">
    <property type="entry name" value="NAD/GMP_synthase"/>
</dbReference>
<dbReference type="InterPro" id="IPR014729">
    <property type="entry name" value="Rossmann-like_a/b/a_fold"/>
</dbReference>
<dbReference type="NCBIfam" id="TIGR00884">
    <property type="entry name" value="guaA_Cterm"/>
    <property type="match status" value="1"/>
</dbReference>
<dbReference type="NCBIfam" id="TIGR00888">
    <property type="entry name" value="guaA_Nterm"/>
    <property type="match status" value="1"/>
</dbReference>
<dbReference type="NCBIfam" id="NF000848">
    <property type="entry name" value="PRK00074.1"/>
    <property type="match status" value="1"/>
</dbReference>
<dbReference type="PANTHER" id="PTHR11922:SF2">
    <property type="entry name" value="GMP SYNTHASE [GLUTAMINE-HYDROLYZING]"/>
    <property type="match status" value="1"/>
</dbReference>
<dbReference type="PANTHER" id="PTHR11922">
    <property type="entry name" value="GMP SYNTHASE-RELATED"/>
    <property type="match status" value="1"/>
</dbReference>
<dbReference type="Pfam" id="PF00117">
    <property type="entry name" value="GATase"/>
    <property type="match status" value="1"/>
</dbReference>
<dbReference type="Pfam" id="PF00958">
    <property type="entry name" value="GMP_synt_C"/>
    <property type="match status" value="1"/>
</dbReference>
<dbReference type="Pfam" id="PF02540">
    <property type="entry name" value="NAD_synthase"/>
    <property type="match status" value="1"/>
</dbReference>
<dbReference type="PRINTS" id="PR00099">
    <property type="entry name" value="CPSGATASE"/>
</dbReference>
<dbReference type="PRINTS" id="PR00096">
    <property type="entry name" value="GATASE"/>
</dbReference>
<dbReference type="SUPFAM" id="SSF52402">
    <property type="entry name" value="Adenine nucleotide alpha hydrolases-like"/>
    <property type="match status" value="1"/>
</dbReference>
<dbReference type="SUPFAM" id="SSF52317">
    <property type="entry name" value="Class I glutamine amidotransferase-like"/>
    <property type="match status" value="1"/>
</dbReference>
<dbReference type="PROSITE" id="PS51273">
    <property type="entry name" value="GATASE_TYPE_1"/>
    <property type="match status" value="1"/>
</dbReference>
<dbReference type="PROSITE" id="PS51553">
    <property type="entry name" value="GMPS_ATP_PPASE"/>
    <property type="match status" value="1"/>
</dbReference>
<gene>
    <name evidence="1" type="primary">guaA</name>
    <name type="ordered locus">LCABL_21540</name>
</gene>
<comment type="function">
    <text evidence="1">Catalyzes the synthesis of GMP from XMP.</text>
</comment>
<comment type="catalytic activity">
    <reaction evidence="1">
        <text>XMP + L-glutamine + ATP + H2O = GMP + L-glutamate + AMP + diphosphate + 2 H(+)</text>
        <dbReference type="Rhea" id="RHEA:11680"/>
        <dbReference type="ChEBI" id="CHEBI:15377"/>
        <dbReference type="ChEBI" id="CHEBI:15378"/>
        <dbReference type="ChEBI" id="CHEBI:29985"/>
        <dbReference type="ChEBI" id="CHEBI:30616"/>
        <dbReference type="ChEBI" id="CHEBI:33019"/>
        <dbReference type="ChEBI" id="CHEBI:57464"/>
        <dbReference type="ChEBI" id="CHEBI:58115"/>
        <dbReference type="ChEBI" id="CHEBI:58359"/>
        <dbReference type="ChEBI" id="CHEBI:456215"/>
        <dbReference type="EC" id="6.3.5.2"/>
    </reaction>
</comment>
<comment type="pathway">
    <text evidence="1">Purine metabolism; GMP biosynthesis; GMP from XMP (L-Gln route): step 1/1.</text>
</comment>
<comment type="subunit">
    <text evidence="1">Homodimer.</text>
</comment>
<proteinExistence type="inferred from homology"/>
<name>GUAA_LACCB</name>
<accession>B3W952</accession>
<evidence type="ECO:0000255" key="1">
    <source>
        <dbReference type="HAMAP-Rule" id="MF_00344"/>
    </source>
</evidence>
<protein>
    <recommendedName>
        <fullName evidence="1">GMP synthase [glutamine-hydrolyzing]</fullName>
        <ecNumber evidence="1">6.3.5.2</ecNumber>
    </recommendedName>
    <alternativeName>
        <fullName evidence="1">GMP synthetase</fullName>
    </alternativeName>
    <alternativeName>
        <fullName evidence="1">Glutamine amidotransferase</fullName>
    </alternativeName>
</protein>
<reference key="1">
    <citation type="submission" date="2008-06" db="EMBL/GenBank/DDBJ databases">
        <title>Lactobacillus casei BL23 complete genome sequence.</title>
        <authorList>
            <person name="Maze A."/>
            <person name="Boel G."/>
            <person name="Bourand A."/>
            <person name="Loux V."/>
            <person name="Gibrat J.F."/>
            <person name="Zuniga M."/>
            <person name="Hartke A."/>
            <person name="Deutscher J."/>
        </authorList>
    </citation>
    <scope>NUCLEOTIDE SEQUENCE [LARGE SCALE GENOMIC DNA]</scope>
    <source>
        <strain>BL23</strain>
    </source>
</reference>